<dbReference type="EC" id="4.1.1.37" evidence="1"/>
<dbReference type="EMBL" id="CP000653">
    <property type="protein sequence ID" value="ABP58900.1"/>
    <property type="molecule type" value="Genomic_DNA"/>
</dbReference>
<dbReference type="RefSeq" id="WP_011915474.1">
    <property type="nucleotide sequence ID" value="NC_009436.1"/>
</dbReference>
<dbReference type="SMR" id="A4W5C0"/>
<dbReference type="STRING" id="399742.Ent638_0210"/>
<dbReference type="KEGG" id="ent:Ent638_0210"/>
<dbReference type="eggNOG" id="COG0407">
    <property type="taxonomic scope" value="Bacteria"/>
</dbReference>
<dbReference type="HOGENOM" id="CLU_040933_0_0_6"/>
<dbReference type="OrthoDB" id="9806656at2"/>
<dbReference type="UniPathway" id="UPA00251">
    <property type="reaction ID" value="UER00321"/>
</dbReference>
<dbReference type="Proteomes" id="UP000000230">
    <property type="component" value="Chromosome"/>
</dbReference>
<dbReference type="GO" id="GO:0005829">
    <property type="term" value="C:cytosol"/>
    <property type="evidence" value="ECO:0007669"/>
    <property type="project" value="TreeGrafter"/>
</dbReference>
<dbReference type="GO" id="GO:0004853">
    <property type="term" value="F:uroporphyrinogen decarboxylase activity"/>
    <property type="evidence" value="ECO:0007669"/>
    <property type="project" value="UniProtKB-UniRule"/>
</dbReference>
<dbReference type="GO" id="GO:0019353">
    <property type="term" value="P:protoporphyrinogen IX biosynthetic process from glutamate"/>
    <property type="evidence" value="ECO:0007669"/>
    <property type="project" value="TreeGrafter"/>
</dbReference>
<dbReference type="CDD" id="cd00717">
    <property type="entry name" value="URO-D"/>
    <property type="match status" value="1"/>
</dbReference>
<dbReference type="FunFam" id="3.20.20.210:FF:000001">
    <property type="entry name" value="Uroporphyrinogen decarboxylase"/>
    <property type="match status" value="1"/>
</dbReference>
<dbReference type="Gene3D" id="3.20.20.210">
    <property type="match status" value="1"/>
</dbReference>
<dbReference type="HAMAP" id="MF_00218">
    <property type="entry name" value="URO_D"/>
    <property type="match status" value="1"/>
</dbReference>
<dbReference type="InterPro" id="IPR038071">
    <property type="entry name" value="UROD/MetE-like_sf"/>
</dbReference>
<dbReference type="InterPro" id="IPR006361">
    <property type="entry name" value="Uroporphyrinogen_deCO2ase_HemE"/>
</dbReference>
<dbReference type="InterPro" id="IPR000257">
    <property type="entry name" value="Uroporphyrinogen_deCOase"/>
</dbReference>
<dbReference type="NCBIfam" id="TIGR01464">
    <property type="entry name" value="hemE"/>
    <property type="match status" value="1"/>
</dbReference>
<dbReference type="PANTHER" id="PTHR21091">
    <property type="entry name" value="METHYLTETRAHYDROFOLATE:HOMOCYSTEINE METHYLTRANSFERASE RELATED"/>
    <property type="match status" value="1"/>
</dbReference>
<dbReference type="PANTHER" id="PTHR21091:SF169">
    <property type="entry name" value="UROPORPHYRINOGEN DECARBOXYLASE"/>
    <property type="match status" value="1"/>
</dbReference>
<dbReference type="Pfam" id="PF01208">
    <property type="entry name" value="URO-D"/>
    <property type="match status" value="1"/>
</dbReference>
<dbReference type="SUPFAM" id="SSF51726">
    <property type="entry name" value="UROD/MetE-like"/>
    <property type="match status" value="1"/>
</dbReference>
<dbReference type="PROSITE" id="PS00906">
    <property type="entry name" value="UROD_1"/>
    <property type="match status" value="1"/>
</dbReference>
<dbReference type="PROSITE" id="PS00907">
    <property type="entry name" value="UROD_2"/>
    <property type="match status" value="1"/>
</dbReference>
<name>DCUP_ENT38</name>
<reference key="1">
    <citation type="journal article" date="2010" name="PLoS Genet.">
        <title>Genome sequence of the plant growth promoting endophytic bacterium Enterobacter sp. 638.</title>
        <authorList>
            <person name="Taghavi S."/>
            <person name="van der Lelie D."/>
            <person name="Hoffman A."/>
            <person name="Zhang Y.B."/>
            <person name="Walla M.D."/>
            <person name="Vangronsveld J."/>
            <person name="Newman L."/>
            <person name="Monchy S."/>
        </authorList>
    </citation>
    <scope>NUCLEOTIDE SEQUENCE [LARGE SCALE GENOMIC DNA]</scope>
    <source>
        <strain>638</strain>
    </source>
</reference>
<keyword id="KW-0963">Cytoplasm</keyword>
<keyword id="KW-0210">Decarboxylase</keyword>
<keyword id="KW-0456">Lyase</keyword>
<keyword id="KW-0627">Porphyrin biosynthesis</keyword>
<comment type="function">
    <text evidence="1">Catalyzes the decarboxylation of four acetate groups of uroporphyrinogen-III to yield coproporphyrinogen-III.</text>
</comment>
<comment type="catalytic activity">
    <reaction evidence="1">
        <text>uroporphyrinogen III + 4 H(+) = coproporphyrinogen III + 4 CO2</text>
        <dbReference type="Rhea" id="RHEA:19865"/>
        <dbReference type="ChEBI" id="CHEBI:15378"/>
        <dbReference type="ChEBI" id="CHEBI:16526"/>
        <dbReference type="ChEBI" id="CHEBI:57308"/>
        <dbReference type="ChEBI" id="CHEBI:57309"/>
        <dbReference type="EC" id="4.1.1.37"/>
    </reaction>
</comment>
<comment type="pathway">
    <text evidence="1">Porphyrin-containing compound metabolism; protoporphyrin-IX biosynthesis; coproporphyrinogen-III from 5-aminolevulinate: step 4/4.</text>
</comment>
<comment type="subunit">
    <text evidence="1">Homodimer.</text>
</comment>
<comment type="subcellular location">
    <subcellularLocation>
        <location evidence="1">Cytoplasm</location>
    </subcellularLocation>
</comment>
<comment type="similarity">
    <text evidence="1">Belongs to the uroporphyrinogen decarboxylase family.</text>
</comment>
<proteinExistence type="inferred from homology"/>
<sequence length="354" mass="39137">MTELKNDRYLRALLRQPVDVTPVWMMRQAGRYLPEYKATRAQAGDFMSLCKNAELACEVTLQPLRRFPLDAAILFSDILTIPDAMGLGLYFETGEGPRFTSPIKSKADIDKLPIPDPEGELGYVMNAVRTIRRELKGEVPLIGFSGSPWTLATYMVEGGSSKAFTVIKKMMYAEPMALHALLDKLAKSVTLYLNAQIKAGAQSVMIFDTWGGVLTGRDYQQFSLYYMHKIIDGLLRENEGRRVPVTLFTKGGGQWLEAMAATGCDALGLDWTTDIADARRRVGDTVALQGNMDPSMLYAQPARIEEEVASILAGFGQGEGHVFNLGHGIHQDVPPEHAGAFVEAVHRHSAQYHL</sequence>
<gene>
    <name evidence="1" type="primary">hemE</name>
    <name type="ordered locus">Ent638_0210</name>
</gene>
<feature type="chain" id="PRO_1000058640" description="Uroporphyrinogen decarboxylase">
    <location>
        <begin position="1"/>
        <end position="354"/>
    </location>
</feature>
<feature type="binding site" evidence="1">
    <location>
        <begin position="27"/>
        <end position="31"/>
    </location>
    <ligand>
        <name>substrate</name>
    </ligand>
</feature>
<feature type="binding site" evidence="1">
    <location>
        <position position="77"/>
    </location>
    <ligand>
        <name>substrate</name>
    </ligand>
</feature>
<feature type="binding site" evidence="1">
    <location>
        <position position="154"/>
    </location>
    <ligand>
        <name>substrate</name>
    </ligand>
</feature>
<feature type="binding site" evidence="1">
    <location>
        <position position="209"/>
    </location>
    <ligand>
        <name>substrate</name>
    </ligand>
</feature>
<feature type="binding site" evidence="1">
    <location>
        <position position="327"/>
    </location>
    <ligand>
        <name>substrate</name>
    </ligand>
</feature>
<feature type="site" description="Transition state stabilizer" evidence="1">
    <location>
        <position position="77"/>
    </location>
</feature>
<protein>
    <recommendedName>
        <fullName evidence="1">Uroporphyrinogen decarboxylase</fullName>
        <shortName evidence="1">UPD</shortName>
        <shortName evidence="1">URO-D</shortName>
        <ecNumber evidence="1">4.1.1.37</ecNumber>
    </recommendedName>
</protein>
<accession>A4W5C0</accession>
<evidence type="ECO:0000255" key="1">
    <source>
        <dbReference type="HAMAP-Rule" id="MF_00218"/>
    </source>
</evidence>
<organism>
    <name type="scientific">Enterobacter sp. (strain 638)</name>
    <dbReference type="NCBI Taxonomy" id="399742"/>
    <lineage>
        <taxon>Bacteria</taxon>
        <taxon>Pseudomonadati</taxon>
        <taxon>Pseudomonadota</taxon>
        <taxon>Gammaproteobacteria</taxon>
        <taxon>Enterobacterales</taxon>
        <taxon>Enterobacteriaceae</taxon>
        <taxon>Enterobacter</taxon>
    </lineage>
</organism>